<keyword id="KW-1185">Reference proteome</keyword>
<organism>
    <name type="scientific">Shigella flexneri</name>
    <dbReference type="NCBI Taxonomy" id="623"/>
    <lineage>
        <taxon>Bacteria</taxon>
        <taxon>Pseudomonadati</taxon>
        <taxon>Pseudomonadota</taxon>
        <taxon>Gammaproteobacteria</taxon>
        <taxon>Enterobacterales</taxon>
        <taxon>Enterobacteriaceae</taxon>
        <taxon>Shigella</taxon>
    </lineage>
</organism>
<name>YGIB_SHIFL</name>
<feature type="chain" id="PRO_0000169400" description="UPF0441 protein YgiB">
    <location>
        <begin position="1"/>
        <end position="223"/>
    </location>
</feature>
<feature type="region of interest" description="Disordered" evidence="2">
    <location>
        <begin position="178"/>
        <end position="223"/>
    </location>
</feature>
<feature type="compositionally biased region" description="Low complexity" evidence="2">
    <location>
        <begin position="178"/>
        <end position="195"/>
    </location>
</feature>
<feature type="compositionally biased region" description="Polar residues" evidence="2">
    <location>
        <begin position="204"/>
        <end position="223"/>
    </location>
</feature>
<proteinExistence type="inferred from homology"/>
<dbReference type="EMBL" id="AE005674">
    <property type="protein sequence ID" value="AAN44555.2"/>
    <property type="status" value="ALT_INIT"/>
    <property type="molecule type" value="Genomic_DNA"/>
</dbReference>
<dbReference type="EMBL" id="AE014073">
    <property type="protein sequence ID" value="AAP18368.1"/>
    <property type="status" value="ALT_INIT"/>
    <property type="molecule type" value="Genomic_DNA"/>
</dbReference>
<dbReference type="RefSeq" id="NP_708848.4">
    <property type="nucleotide sequence ID" value="NC_004337.2"/>
</dbReference>
<dbReference type="RefSeq" id="WP_000831543.1">
    <property type="nucleotide sequence ID" value="NZ_WPGW01000100.1"/>
</dbReference>
<dbReference type="SMR" id="P0ADT4"/>
<dbReference type="STRING" id="198214.SF3077"/>
<dbReference type="PaxDb" id="198214-SF3077"/>
<dbReference type="GeneID" id="1026662"/>
<dbReference type="KEGG" id="sfl:SF3077"/>
<dbReference type="KEGG" id="sfx:S3282"/>
<dbReference type="PATRIC" id="fig|198214.7.peg.3652"/>
<dbReference type="HOGENOM" id="CLU_095624_0_0_6"/>
<dbReference type="Proteomes" id="UP000001006">
    <property type="component" value="Chromosome"/>
</dbReference>
<dbReference type="Proteomes" id="UP000002673">
    <property type="component" value="Chromosome"/>
</dbReference>
<dbReference type="HAMAP" id="MF_01188">
    <property type="entry name" value="UPF0441"/>
    <property type="match status" value="1"/>
</dbReference>
<dbReference type="InterPro" id="IPR009576">
    <property type="entry name" value="Biofilm_formation_YgiB"/>
</dbReference>
<dbReference type="NCBIfam" id="NF008655">
    <property type="entry name" value="PRK11653.1"/>
    <property type="match status" value="1"/>
</dbReference>
<dbReference type="Pfam" id="PF06693">
    <property type="entry name" value="DUF1190"/>
    <property type="match status" value="1"/>
</dbReference>
<sequence>MKRTKSIRHASFRKNWSARHLTPVALAVATVFMLAGCEKSDETVSLYQNADDCSAANPGKSAECTTAYNNALKEAERTAPKYATREDCVAEFGEGQCQQAPAQAGMAPENQAQAQQSSGSFWMPLMAGYMMGRLMGGGAGFAQQPLFSSKNPASPAYGKYTDATGKNYGAAQPGRTMTVPKTAMAPKPATTTTVTRGGFGESVAKQSTMQRSATGTSSRSMGG</sequence>
<evidence type="ECO:0000255" key="1">
    <source>
        <dbReference type="HAMAP-Rule" id="MF_01188"/>
    </source>
</evidence>
<evidence type="ECO:0000256" key="2">
    <source>
        <dbReference type="SAM" id="MobiDB-lite"/>
    </source>
</evidence>
<evidence type="ECO:0000305" key="3"/>
<gene>
    <name evidence="1" type="primary">ygiB</name>
    <name type="ordered locus">SF3077</name>
    <name type="ordered locus">S3282</name>
</gene>
<reference key="1">
    <citation type="journal article" date="2002" name="Nucleic Acids Res.">
        <title>Genome sequence of Shigella flexneri 2a: insights into pathogenicity through comparison with genomes of Escherichia coli K12 and O157.</title>
        <authorList>
            <person name="Jin Q."/>
            <person name="Yuan Z."/>
            <person name="Xu J."/>
            <person name="Wang Y."/>
            <person name="Shen Y."/>
            <person name="Lu W."/>
            <person name="Wang J."/>
            <person name="Liu H."/>
            <person name="Yang J."/>
            <person name="Yang F."/>
            <person name="Zhang X."/>
            <person name="Zhang J."/>
            <person name="Yang G."/>
            <person name="Wu H."/>
            <person name="Qu D."/>
            <person name="Dong J."/>
            <person name="Sun L."/>
            <person name="Xue Y."/>
            <person name="Zhao A."/>
            <person name="Gao Y."/>
            <person name="Zhu J."/>
            <person name="Kan B."/>
            <person name="Ding K."/>
            <person name="Chen S."/>
            <person name="Cheng H."/>
            <person name="Yao Z."/>
            <person name="He B."/>
            <person name="Chen R."/>
            <person name="Ma D."/>
            <person name="Qiang B."/>
            <person name="Wen Y."/>
            <person name="Hou Y."/>
            <person name="Yu J."/>
        </authorList>
    </citation>
    <scope>NUCLEOTIDE SEQUENCE [LARGE SCALE GENOMIC DNA]</scope>
    <source>
        <strain>301 / Serotype 2a</strain>
    </source>
</reference>
<reference key="2">
    <citation type="journal article" date="2003" name="Infect. Immun.">
        <title>Complete genome sequence and comparative genomics of Shigella flexneri serotype 2a strain 2457T.</title>
        <authorList>
            <person name="Wei J."/>
            <person name="Goldberg M.B."/>
            <person name="Burland V."/>
            <person name="Venkatesan M.M."/>
            <person name="Deng W."/>
            <person name="Fournier G."/>
            <person name="Mayhew G.F."/>
            <person name="Plunkett G. III"/>
            <person name="Rose D.J."/>
            <person name="Darling A."/>
            <person name="Mau B."/>
            <person name="Perna N.T."/>
            <person name="Payne S.M."/>
            <person name="Runyen-Janecky L.J."/>
            <person name="Zhou S."/>
            <person name="Schwartz D.C."/>
            <person name="Blattner F.R."/>
        </authorList>
    </citation>
    <scope>NUCLEOTIDE SEQUENCE [LARGE SCALE GENOMIC DNA]</scope>
    <source>
        <strain>ATCC 700930 / 2457T / Serotype 2a</strain>
    </source>
</reference>
<protein>
    <recommendedName>
        <fullName evidence="1">UPF0441 protein YgiB</fullName>
    </recommendedName>
</protein>
<comment type="similarity">
    <text evidence="1">Belongs to the UPF0441 family.</text>
</comment>
<comment type="sequence caution" evidence="3">
    <conflict type="erroneous initiation">
        <sequence resource="EMBL-CDS" id="AAN44555"/>
    </conflict>
    <text>Extended N-terminus.</text>
</comment>
<comment type="sequence caution" evidence="3">
    <conflict type="erroneous initiation">
        <sequence resource="EMBL-CDS" id="AAP18368"/>
    </conflict>
    <text>Extended N-terminus.</text>
</comment>
<accession>P0ADT4</accession>
<accession>P24195</accession>